<protein>
    <recommendedName>
        <fullName evidence="3">Phenylalanine dehydrogenase</fullName>
        <shortName evidence="3">PheDH</shortName>
        <ecNumber evidence="2">1.4.1.20</ecNumber>
    </recommendedName>
</protein>
<evidence type="ECO:0000250" key="1">
    <source>
        <dbReference type="UniProtKB" id="Q59771"/>
    </source>
</evidence>
<evidence type="ECO:0000269" key="2">
    <source ref="2"/>
</evidence>
<evidence type="ECO:0000303" key="3">
    <source ref="2"/>
</evidence>
<evidence type="ECO:0000305" key="4"/>
<evidence type="ECO:0000312" key="5">
    <source>
        <dbReference type="EMBL" id="EGL81949.1"/>
    </source>
</evidence>
<gene>
    <name evidence="5" type="ORF">CathTA2_2466</name>
</gene>
<organism>
    <name type="scientific">Caldalkalibacillus thermarum (strain TA2.A1)</name>
    <dbReference type="NCBI Taxonomy" id="986075"/>
    <lineage>
        <taxon>Bacteria</taxon>
        <taxon>Bacillati</taxon>
        <taxon>Bacillota</taxon>
        <taxon>Bacilli</taxon>
        <taxon>Bacillales</taxon>
        <taxon>Bacillaceae</taxon>
        <taxon>Caldalkalibacillus</taxon>
    </lineage>
</organism>
<reference key="1">
    <citation type="journal article" date="2011" name="J. Bacteriol.">
        <title>Draft genome sequence of the thermoalkaliphilic Caldalkalibacillus thermarum strain TA2.A1.</title>
        <authorList>
            <person name="Kalamorz F."/>
            <person name="Keis S."/>
            <person name="McMillan D.G."/>
            <person name="Olsson K."/>
            <person name="Stanton J.A."/>
            <person name="Stockwell P."/>
            <person name="Black M.A."/>
            <person name="Klingeman D.M."/>
            <person name="Land M.L."/>
            <person name="Han C.S."/>
            <person name="Martin S.L."/>
            <person name="Becher S.A."/>
            <person name="Peddie C.J."/>
            <person name="Morgan H.W."/>
            <person name="Matthies D."/>
            <person name="Preiss L."/>
            <person name="Meier T."/>
            <person name="Brown S.D."/>
            <person name="Cook G.M."/>
        </authorList>
    </citation>
    <scope>NUCLEOTIDE SEQUENCE [LARGE SCALE GENOMIC DNA]</scope>
    <source>
        <strain>TA2.A1</strain>
    </source>
</reference>
<reference key="2">
    <citation type="journal article" date="2017" name="ACS Catal.">
        <title>Understanding and overcoming the limitations of Bacillus badius and Caldalkalibacillus thermarum amine dehydrogenases for biocatalytic reductive amination.</title>
        <authorList>
            <person name="Pushpanath A."/>
            <person name="Siirola E."/>
            <person name="Bornadel A."/>
            <person name="Woodlock D."/>
            <person name="Schell U."/>
        </authorList>
    </citation>
    <scope>FUNCTION</scope>
    <scope>CATALYTIC ACTIVITY</scope>
    <scope>BIOPHYSICOCHEMICAL PROPERTIES</scope>
    <scope>PROTEIN ENGINEERING</scope>
    <scope>BIOTECHNOLOGY</scope>
</reference>
<sequence length="370" mass="40555">MSTVTFDQISEHEQVMFCNDPHTGLKAIIAIHNTTLGPALGGCRMLPYKSEEEALTDVLRLSKGMTYKCVAADVDFGGGKAVIIGDPRKDKTPELFRAFGQFVQSLNGRFYTGTDMGTTPEDFVQAYKETSFIVGLPEEYGGNGDSSVTTAFGVMQGLRAVSQFLWGTDVLTERVFAVQGLGKVGFKVAEGLLKEGANVYVTDVDPETIAKLEEKAYQYPGHVQAVTADDIYGVGADVFVPCAIGGIINDETIERLKVKAVCGAANNQLLEDRHGKVLQAKNILYAPDYIVNAGGLIQVSDELYGPNKARVLKKTRALYDTLFEIFQSAEKKAVSTVEAANQFVEERLQKRARLNSFFSPDNPPKWRVRR</sequence>
<feature type="chain" id="PRO_0000445469" description="Phenylalanine dehydrogenase">
    <location>
        <begin position="1"/>
        <end position="370"/>
    </location>
</feature>
<feature type="active site" description="Proton donor/acceptor" evidence="1">
    <location>
        <position position="80"/>
    </location>
</feature>
<feature type="binding site" evidence="1">
    <location>
        <position position="44"/>
    </location>
    <ligand>
        <name>NAD(+)</name>
        <dbReference type="ChEBI" id="CHEBI:57540"/>
    </ligand>
</feature>
<feature type="binding site" evidence="1">
    <location>
        <position position="68"/>
    </location>
    <ligand>
        <name>L-phenylalanine</name>
        <dbReference type="ChEBI" id="CHEBI:58095"/>
    </ligand>
</feature>
<feature type="binding site" evidence="1">
    <location>
        <begin position="114"/>
        <end position="115"/>
    </location>
    <ligand>
        <name>L-phenylalanine</name>
        <dbReference type="ChEBI" id="CHEBI:58095"/>
    </ligand>
</feature>
<feature type="binding site" evidence="1">
    <location>
        <position position="115"/>
    </location>
    <ligand>
        <name>NAD(+)</name>
        <dbReference type="ChEBI" id="CHEBI:57540"/>
    </ligand>
</feature>
<feature type="binding site" evidence="1">
    <location>
        <position position="146"/>
    </location>
    <ligand>
        <name>NAD(+)</name>
        <dbReference type="ChEBI" id="CHEBI:57540"/>
    </ligand>
</feature>
<feature type="binding site" evidence="1">
    <location>
        <position position="150"/>
    </location>
    <ligand>
        <name>NAD(+)</name>
        <dbReference type="ChEBI" id="CHEBI:57540"/>
    </ligand>
</feature>
<feature type="binding site" evidence="1">
    <location>
        <begin position="180"/>
        <end position="186"/>
    </location>
    <ligand>
        <name>NAD(+)</name>
        <dbReference type="ChEBI" id="CHEBI:57540"/>
    </ligand>
</feature>
<feature type="binding site" evidence="1">
    <location>
        <begin position="203"/>
        <end position="204"/>
    </location>
    <ligand>
        <name>NAD(+)</name>
        <dbReference type="ChEBI" id="CHEBI:57540"/>
    </ligand>
</feature>
<feature type="binding site" evidence="1">
    <location>
        <begin position="243"/>
        <end position="244"/>
    </location>
    <ligand>
        <name>NAD(+)</name>
        <dbReference type="ChEBI" id="CHEBI:57540"/>
    </ligand>
</feature>
<feature type="binding site" evidence="1">
    <location>
        <begin position="264"/>
        <end position="266"/>
    </location>
    <ligand>
        <name>NAD(+)</name>
        <dbReference type="ChEBI" id="CHEBI:57540"/>
    </ligand>
</feature>
<feature type="binding site" evidence="1">
    <location>
        <position position="266"/>
    </location>
    <ligand>
        <name>L-phenylalanine</name>
        <dbReference type="ChEBI" id="CHEBI:58095"/>
    </ligand>
</feature>
<proteinExistence type="evidence at protein level"/>
<dbReference type="EC" id="1.4.1.20" evidence="2"/>
<dbReference type="EMBL" id="AFCE01000158">
    <property type="protein sequence ID" value="EGL81949.1"/>
    <property type="molecule type" value="Genomic_DNA"/>
</dbReference>
<dbReference type="RefSeq" id="WP_007505854.1">
    <property type="nucleotide sequence ID" value="NZ_AFCE01000158.1"/>
</dbReference>
<dbReference type="SMR" id="F5L9G2"/>
<dbReference type="eggNOG" id="COG0334">
    <property type="taxonomic scope" value="Bacteria"/>
</dbReference>
<dbReference type="OrthoDB" id="9803297at2"/>
<dbReference type="UniPathway" id="UPA00121">
    <property type="reaction ID" value="UER00346"/>
</dbReference>
<dbReference type="Proteomes" id="UP000010716">
    <property type="component" value="Unassembled WGS sequence"/>
</dbReference>
<dbReference type="GO" id="GO:0000166">
    <property type="term" value="F:nucleotide binding"/>
    <property type="evidence" value="ECO:0007669"/>
    <property type="project" value="UniProtKB-KW"/>
</dbReference>
<dbReference type="GO" id="GO:0050175">
    <property type="term" value="F:phenylalanine dehydrogenase activity"/>
    <property type="evidence" value="ECO:0007669"/>
    <property type="project" value="UniProtKB-EC"/>
</dbReference>
<dbReference type="GO" id="GO:0009094">
    <property type="term" value="P:L-phenylalanine biosynthetic process"/>
    <property type="evidence" value="ECO:0007669"/>
    <property type="project" value="UniProtKB-UniPathway"/>
</dbReference>
<dbReference type="CDD" id="cd01075">
    <property type="entry name" value="NAD_bind_Leu_Phe_Val_DH"/>
    <property type="match status" value="1"/>
</dbReference>
<dbReference type="FunFam" id="3.40.50.10860:FF:000010">
    <property type="entry name" value="Leucine dehydrogenase"/>
    <property type="match status" value="1"/>
</dbReference>
<dbReference type="Gene3D" id="3.40.50.10860">
    <property type="entry name" value="Leucine Dehydrogenase, chain A, domain 1"/>
    <property type="match status" value="1"/>
</dbReference>
<dbReference type="Gene3D" id="3.40.50.720">
    <property type="entry name" value="NAD(P)-binding Rossmann-like Domain"/>
    <property type="match status" value="1"/>
</dbReference>
<dbReference type="InterPro" id="IPR046346">
    <property type="entry name" value="Aminoacid_DH-like_N_sf"/>
</dbReference>
<dbReference type="InterPro" id="IPR006095">
    <property type="entry name" value="Glu/Leu/Phe/Val/Trp_DH"/>
</dbReference>
<dbReference type="InterPro" id="IPR006096">
    <property type="entry name" value="Glu/Leu/Phe/Val/Trp_DH_C"/>
</dbReference>
<dbReference type="InterPro" id="IPR006097">
    <property type="entry name" value="Glu/Leu/Phe/Val/Trp_DH_dimer"/>
</dbReference>
<dbReference type="InterPro" id="IPR033524">
    <property type="entry name" value="Glu/Leu/Phe/Val_DH_AS"/>
</dbReference>
<dbReference type="InterPro" id="IPR016211">
    <property type="entry name" value="Glu/Phe/Leu/Val/Trp_DH_bac/arc"/>
</dbReference>
<dbReference type="InterPro" id="IPR036291">
    <property type="entry name" value="NAD(P)-bd_dom_sf"/>
</dbReference>
<dbReference type="PANTHER" id="PTHR42722">
    <property type="entry name" value="LEUCINE DEHYDROGENASE"/>
    <property type="match status" value="1"/>
</dbReference>
<dbReference type="PANTHER" id="PTHR42722:SF1">
    <property type="entry name" value="VALINE DEHYDROGENASE"/>
    <property type="match status" value="1"/>
</dbReference>
<dbReference type="Pfam" id="PF00208">
    <property type="entry name" value="ELFV_dehydrog"/>
    <property type="match status" value="1"/>
</dbReference>
<dbReference type="Pfam" id="PF02812">
    <property type="entry name" value="ELFV_dehydrog_N"/>
    <property type="match status" value="1"/>
</dbReference>
<dbReference type="PIRSF" id="PIRSF000188">
    <property type="entry name" value="Phe_leu_dh"/>
    <property type="match status" value="1"/>
</dbReference>
<dbReference type="PRINTS" id="PR00082">
    <property type="entry name" value="GLFDHDRGNASE"/>
</dbReference>
<dbReference type="SMART" id="SM00839">
    <property type="entry name" value="ELFV_dehydrog"/>
    <property type="match status" value="1"/>
</dbReference>
<dbReference type="SUPFAM" id="SSF53223">
    <property type="entry name" value="Aminoacid dehydrogenase-like, N-terminal domain"/>
    <property type="match status" value="1"/>
</dbReference>
<dbReference type="SUPFAM" id="SSF51735">
    <property type="entry name" value="NAD(P)-binding Rossmann-fold domains"/>
    <property type="match status" value="1"/>
</dbReference>
<dbReference type="PROSITE" id="PS00074">
    <property type="entry name" value="GLFV_DEHYDROGENASE"/>
    <property type="match status" value="1"/>
</dbReference>
<keyword id="KW-0520">NAD</keyword>
<keyword id="KW-0547">Nucleotide-binding</keyword>
<keyword id="KW-0560">Oxidoreductase</keyword>
<keyword id="KW-1185">Reference proteome</keyword>
<accession>F5L9G2</accession>
<comment type="function">
    <text evidence="2">Catalyzes the reversible NAD(+)-dependent oxidative deamination of L-phenylalanine to phenylpyruvate.</text>
</comment>
<comment type="catalytic activity">
    <reaction evidence="2">
        <text>L-phenylalanine + NAD(+) + H2O = 3-phenylpyruvate + NH4(+) + NADH + H(+)</text>
        <dbReference type="Rhea" id="RHEA:21408"/>
        <dbReference type="ChEBI" id="CHEBI:15377"/>
        <dbReference type="ChEBI" id="CHEBI:15378"/>
        <dbReference type="ChEBI" id="CHEBI:18005"/>
        <dbReference type="ChEBI" id="CHEBI:28938"/>
        <dbReference type="ChEBI" id="CHEBI:57540"/>
        <dbReference type="ChEBI" id="CHEBI:57945"/>
        <dbReference type="ChEBI" id="CHEBI:58095"/>
        <dbReference type="EC" id="1.4.1.20"/>
    </reaction>
</comment>
<comment type="biophysicochemical properties">
    <kinetics>
        <KM evidence="2">5.71 mM for phenylpyruvate</KM>
        <KM evidence="2">10.24 mM for ketoleucine</KM>
        <KM evidence="2">0.88 mM for 2-oxo-4-phenylbutyrate</KM>
        <KM evidence="2">38.2 uM for NADH</KM>
        <KM evidence="2">157.9 mM for NH(3)</KM>
        <text evidence="2">kcat is 74.8 sec(-1) with phenylpyruvate as substrate. kcat is 56.2 sec(-1) with ketoleucine as substrate. kcat is 2.2 sec(-1) with 2-oxo-4-phenylbutyrate as substrate.</text>
    </kinetics>
    <temperatureDependence>
        <text evidence="2">Thermostable. Has a melting point (Tm) of 85.5 degrees Celsius.</text>
    </temperatureDependence>
</comment>
<comment type="pathway">
    <text evidence="4">Amino-acid biosynthesis; L-phenylalanine biosynthesis; L-phenylalanine from phenylpyruvate (PDH route): step 1/1.</text>
</comment>
<comment type="biotechnology">
    <text evidence="2">This enzyme has been engineered to lead to an amine dehydrogenase able to catalyze the direct asymmetric reductive amination of ketones using ammonia as the sole amino donor. This reaction is a highly desirable transformation for the synthesis of chiral amine intermediates, particularly for the pharmaceuticals industry.</text>
</comment>
<comment type="similarity">
    <text evidence="4">Belongs to the Glu/Leu/Phe/Val dehydrogenases family.</text>
</comment>
<name>DHPH_CALTT</name>